<dbReference type="EC" id="2.1.1.192" evidence="1"/>
<dbReference type="EMBL" id="AE000516">
    <property type="protein sequence ID" value="AAK47272.1"/>
    <property type="molecule type" value="Genomic_DNA"/>
</dbReference>
<dbReference type="PIR" id="B70924">
    <property type="entry name" value="B70924"/>
</dbReference>
<dbReference type="PIR" id="C70924">
    <property type="entry name" value="C70924"/>
</dbReference>
<dbReference type="RefSeq" id="WP_003414658.1">
    <property type="nucleotide sequence ID" value="NZ_KK341227.1"/>
</dbReference>
<dbReference type="SMR" id="P9WH14"/>
<dbReference type="GeneID" id="45426868"/>
<dbReference type="KEGG" id="mtc:MT2947"/>
<dbReference type="PATRIC" id="fig|83331.31.peg.3184"/>
<dbReference type="HOGENOM" id="CLU_029101_0_2_11"/>
<dbReference type="Proteomes" id="UP000001020">
    <property type="component" value="Chromosome"/>
</dbReference>
<dbReference type="GO" id="GO:0005737">
    <property type="term" value="C:cytoplasm"/>
    <property type="evidence" value="ECO:0007669"/>
    <property type="project" value="UniProtKB-SubCell"/>
</dbReference>
<dbReference type="GO" id="GO:0051539">
    <property type="term" value="F:4 iron, 4 sulfur cluster binding"/>
    <property type="evidence" value="ECO:0007669"/>
    <property type="project" value="UniProtKB-UniRule"/>
</dbReference>
<dbReference type="GO" id="GO:0046872">
    <property type="term" value="F:metal ion binding"/>
    <property type="evidence" value="ECO:0007669"/>
    <property type="project" value="UniProtKB-KW"/>
</dbReference>
<dbReference type="GO" id="GO:0070040">
    <property type="term" value="F:rRNA (adenine(2503)-C2-)-methyltransferase activity"/>
    <property type="evidence" value="ECO:0007669"/>
    <property type="project" value="UniProtKB-UniRule"/>
</dbReference>
<dbReference type="GO" id="GO:0019843">
    <property type="term" value="F:rRNA binding"/>
    <property type="evidence" value="ECO:0007669"/>
    <property type="project" value="UniProtKB-UniRule"/>
</dbReference>
<dbReference type="GO" id="GO:0002935">
    <property type="term" value="F:tRNA (adenine(37)-C2)-methyltransferase activity"/>
    <property type="evidence" value="ECO:0007669"/>
    <property type="project" value="UniProtKB-UniRule"/>
</dbReference>
<dbReference type="GO" id="GO:0000049">
    <property type="term" value="F:tRNA binding"/>
    <property type="evidence" value="ECO:0007669"/>
    <property type="project" value="UniProtKB-UniRule"/>
</dbReference>
<dbReference type="GO" id="GO:0070475">
    <property type="term" value="P:rRNA base methylation"/>
    <property type="evidence" value="ECO:0007669"/>
    <property type="project" value="UniProtKB-UniRule"/>
</dbReference>
<dbReference type="GO" id="GO:0030488">
    <property type="term" value="P:tRNA methylation"/>
    <property type="evidence" value="ECO:0007669"/>
    <property type="project" value="UniProtKB-UniRule"/>
</dbReference>
<dbReference type="CDD" id="cd01335">
    <property type="entry name" value="Radical_SAM"/>
    <property type="match status" value="1"/>
</dbReference>
<dbReference type="FunFam" id="1.10.150.530:FF:000004">
    <property type="entry name" value="Probable dual-specificity RNA methyltransferase RlmN"/>
    <property type="match status" value="1"/>
</dbReference>
<dbReference type="FunFam" id="3.20.20.70:FF:000014">
    <property type="entry name" value="Probable dual-specificity RNA methyltransferase RlmN"/>
    <property type="match status" value="1"/>
</dbReference>
<dbReference type="Gene3D" id="1.10.150.530">
    <property type="match status" value="1"/>
</dbReference>
<dbReference type="Gene3D" id="3.20.20.70">
    <property type="entry name" value="Aldolase class I"/>
    <property type="match status" value="1"/>
</dbReference>
<dbReference type="HAMAP" id="MF_01849">
    <property type="entry name" value="RNA_methyltr_RlmN"/>
    <property type="match status" value="1"/>
</dbReference>
<dbReference type="InterPro" id="IPR013785">
    <property type="entry name" value="Aldolase_TIM"/>
</dbReference>
<dbReference type="InterPro" id="IPR040072">
    <property type="entry name" value="Methyltransferase_A"/>
</dbReference>
<dbReference type="InterPro" id="IPR027492">
    <property type="entry name" value="RNA_MTrfase_RlmN"/>
</dbReference>
<dbReference type="InterPro" id="IPR004383">
    <property type="entry name" value="rRNA_lsu_MTrfase_RlmN/Cfr"/>
</dbReference>
<dbReference type="InterPro" id="IPR007197">
    <property type="entry name" value="rSAM"/>
</dbReference>
<dbReference type="NCBIfam" id="TIGR00048">
    <property type="entry name" value="rRNA_mod_RlmN"/>
    <property type="match status" value="1"/>
</dbReference>
<dbReference type="PANTHER" id="PTHR30544">
    <property type="entry name" value="23S RRNA METHYLTRANSFERASE"/>
    <property type="match status" value="1"/>
</dbReference>
<dbReference type="PANTHER" id="PTHR30544:SF5">
    <property type="entry name" value="RADICAL SAM CORE DOMAIN-CONTAINING PROTEIN"/>
    <property type="match status" value="1"/>
</dbReference>
<dbReference type="Pfam" id="PF04055">
    <property type="entry name" value="Radical_SAM"/>
    <property type="match status" value="1"/>
</dbReference>
<dbReference type="PIRSF" id="PIRSF006004">
    <property type="entry name" value="CHP00048"/>
    <property type="match status" value="1"/>
</dbReference>
<dbReference type="SFLD" id="SFLDF00275">
    <property type="entry name" value="adenosine_C2_methyltransferase"/>
    <property type="match status" value="1"/>
</dbReference>
<dbReference type="SFLD" id="SFLDG01062">
    <property type="entry name" value="methyltransferase_(Class_A)"/>
    <property type="match status" value="1"/>
</dbReference>
<dbReference type="SUPFAM" id="SSF102114">
    <property type="entry name" value="Radical SAM enzymes"/>
    <property type="match status" value="1"/>
</dbReference>
<dbReference type="PROSITE" id="PS51918">
    <property type="entry name" value="RADICAL_SAM"/>
    <property type="match status" value="1"/>
</dbReference>
<protein>
    <recommendedName>
        <fullName evidence="1">Probable dual-specificity RNA methyltransferase RlmN</fullName>
        <ecNumber evidence="1">2.1.1.192</ecNumber>
    </recommendedName>
    <alternativeName>
        <fullName evidence="1">23S rRNA (adenine(2503)-C(2))-methyltransferase</fullName>
    </alternativeName>
    <alternativeName>
        <fullName evidence="1">23S rRNA m2A2503 methyltransferase</fullName>
    </alternativeName>
    <alternativeName>
        <fullName evidence="1">Ribosomal RNA large subunit methyltransferase N</fullName>
    </alternativeName>
    <alternativeName>
        <fullName evidence="1">tRNA (adenine(37)-C(2))-methyltransferase</fullName>
    </alternativeName>
    <alternativeName>
        <fullName evidence="1">tRNA m2A37 methyltransferase</fullName>
    </alternativeName>
</protein>
<comment type="function">
    <text evidence="1">Specifically methylates position 2 of adenine 2503 in 23S rRNA and position 2 of adenine 37 in tRNAs.</text>
</comment>
<comment type="catalytic activity">
    <reaction evidence="1">
        <text>adenosine(2503) in 23S rRNA + 2 reduced [2Fe-2S]-[ferredoxin] + 2 S-adenosyl-L-methionine = 2-methyladenosine(2503) in 23S rRNA + 5'-deoxyadenosine + L-methionine + 2 oxidized [2Fe-2S]-[ferredoxin] + S-adenosyl-L-homocysteine</text>
        <dbReference type="Rhea" id="RHEA:42916"/>
        <dbReference type="Rhea" id="RHEA-COMP:10000"/>
        <dbReference type="Rhea" id="RHEA-COMP:10001"/>
        <dbReference type="Rhea" id="RHEA-COMP:10152"/>
        <dbReference type="Rhea" id="RHEA-COMP:10282"/>
        <dbReference type="ChEBI" id="CHEBI:17319"/>
        <dbReference type="ChEBI" id="CHEBI:33737"/>
        <dbReference type="ChEBI" id="CHEBI:33738"/>
        <dbReference type="ChEBI" id="CHEBI:57844"/>
        <dbReference type="ChEBI" id="CHEBI:57856"/>
        <dbReference type="ChEBI" id="CHEBI:59789"/>
        <dbReference type="ChEBI" id="CHEBI:74411"/>
        <dbReference type="ChEBI" id="CHEBI:74497"/>
        <dbReference type="EC" id="2.1.1.192"/>
    </reaction>
</comment>
<comment type="catalytic activity">
    <reaction evidence="1">
        <text>adenosine(37) in tRNA + 2 reduced [2Fe-2S]-[ferredoxin] + 2 S-adenosyl-L-methionine = 2-methyladenosine(37) in tRNA + 5'-deoxyadenosine + L-methionine + 2 oxidized [2Fe-2S]-[ferredoxin] + S-adenosyl-L-homocysteine</text>
        <dbReference type="Rhea" id="RHEA:43332"/>
        <dbReference type="Rhea" id="RHEA-COMP:10000"/>
        <dbReference type="Rhea" id="RHEA-COMP:10001"/>
        <dbReference type="Rhea" id="RHEA-COMP:10162"/>
        <dbReference type="Rhea" id="RHEA-COMP:10485"/>
        <dbReference type="ChEBI" id="CHEBI:17319"/>
        <dbReference type="ChEBI" id="CHEBI:33737"/>
        <dbReference type="ChEBI" id="CHEBI:33738"/>
        <dbReference type="ChEBI" id="CHEBI:57844"/>
        <dbReference type="ChEBI" id="CHEBI:57856"/>
        <dbReference type="ChEBI" id="CHEBI:59789"/>
        <dbReference type="ChEBI" id="CHEBI:74411"/>
        <dbReference type="ChEBI" id="CHEBI:74497"/>
        <dbReference type="EC" id="2.1.1.192"/>
    </reaction>
</comment>
<comment type="cofactor">
    <cofactor evidence="1">
        <name>[4Fe-4S] cluster</name>
        <dbReference type="ChEBI" id="CHEBI:49883"/>
    </cofactor>
    <text evidence="1">Binds 1 [4Fe-4S] cluster. The cluster is coordinated with 3 cysteines and an exchangeable S-adenosyl-L-methionine.</text>
</comment>
<comment type="subcellular location">
    <subcellularLocation>
        <location evidence="1">Cytoplasm</location>
    </subcellularLocation>
</comment>
<comment type="miscellaneous">
    <text evidence="1">Reaction proceeds by a ping-pong mechanism involving intermediate methylation of a conserved cysteine residue.</text>
</comment>
<comment type="similarity">
    <text evidence="1">Belongs to the radical SAM superfamily. RlmN family.</text>
</comment>
<keyword id="KW-0004">4Fe-4S</keyword>
<keyword id="KW-0963">Cytoplasm</keyword>
<keyword id="KW-1015">Disulfide bond</keyword>
<keyword id="KW-0408">Iron</keyword>
<keyword id="KW-0411">Iron-sulfur</keyword>
<keyword id="KW-0479">Metal-binding</keyword>
<keyword id="KW-0489">Methyltransferase</keyword>
<keyword id="KW-1185">Reference proteome</keyword>
<keyword id="KW-0698">rRNA processing</keyword>
<keyword id="KW-0949">S-adenosyl-L-methionine</keyword>
<keyword id="KW-0808">Transferase</keyword>
<keyword id="KW-0819">tRNA processing</keyword>
<name>RLMN_MYCTO</name>
<feature type="chain" id="PRO_0000428266" description="Probable dual-specificity RNA methyltransferase RlmN">
    <location>
        <begin position="1"/>
        <end position="364"/>
    </location>
</feature>
<feature type="domain" description="Radical SAM core" evidence="2">
    <location>
        <begin position="112"/>
        <end position="350"/>
    </location>
</feature>
<feature type="active site" description="Proton acceptor" evidence="1">
    <location>
        <position position="106"/>
    </location>
</feature>
<feature type="active site" description="S-methylcysteine intermediate" evidence="1">
    <location>
        <position position="356"/>
    </location>
</feature>
<feature type="binding site" evidence="1">
    <location>
        <position position="126"/>
    </location>
    <ligand>
        <name>[4Fe-4S] cluster</name>
        <dbReference type="ChEBI" id="CHEBI:49883"/>
        <note>4Fe-4S-S-AdoMet</note>
    </ligand>
</feature>
<feature type="binding site" evidence="1">
    <location>
        <position position="130"/>
    </location>
    <ligand>
        <name>[4Fe-4S] cluster</name>
        <dbReference type="ChEBI" id="CHEBI:49883"/>
        <note>4Fe-4S-S-AdoMet</note>
    </ligand>
</feature>
<feature type="binding site" evidence="1">
    <location>
        <position position="133"/>
    </location>
    <ligand>
        <name>[4Fe-4S] cluster</name>
        <dbReference type="ChEBI" id="CHEBI:49883"/>
        <note>4Fe-4S-S-AdoMet</note>
    </ligand>
</feature>
<feature type="binding site" evidence="1">
    <location>
        <begin position="177"/>
        <end position="178"/>
    </location>
    <ligand>
        <name>S-adenosyl-L-methionine</name>
        <dbReference type="ChEBI" id="CHEBI:59789"/>
    </ligand>
</feature>
<feature type="binding site" evidence="1">
    <location>
        <position position="211"/>
    </location>
    <ligand>
        <name>S-adenosyl-L-methionine</name>
        <dbReference type="ChEBI" id="CHEBI:59789"/>
    </ligand>
</feature>
<feature type="binding site" evidence="1">
    <location>
        <begin position="234"/>
        <end position="236"/>
    </location>
    <ligand>
        <name>S-adenosyl-L-methionine</name>
        <dbReference type="ChEBI" id="CHEBI:59789"/>
    </ligand>
</feature>
<feature type="binding site" evidence="1">
    <location>
        <position position="313"/>
    </location>
    <ligand>
        <name>S-adenosyl-L-methionine</name>
        <dbReference type="ChEBI" id="CHEBI:59789"/>
    </ligand>
</feature>
<feature type="disulfide bond" description="(transient)" evidence="1">
    <location>
        <begin position="119"/>
        <end position="356"/>
    </location>
</feature>
<sequence length="364" mass="39255">MVPELMFDEPRPGRPPRHLADLDAAGRASAVAELGLPAFRAKQLAHQYYGRLIADPRQMTDLPAAVRDRIAGAMFPNLLTASADITCDAGQTRKTLWRAVDGTMFESVLMRYPRRNTVCISSQAGCGMACPFCATGQGGLTRNLSTAEILEQVRAGAAALRDDFGDRLSNVVFMGMGEPLANYARVLAAVQRITARPPSGFGISARAVTVSTVGLAPAIRNLADARLGVTLALSLHAPDDGLRDTLVPVNNRWRISEALDAARYYANVTGRRVSIEYALIRDVNDQPWRADLLGKRLHRVLGPLAHVNLIPLNPTPGSDWDASPKPVEREFVKRVRAKGVSCTVRDTRGREISAACGQLAAVGG</sequence>
<accession>P9WH14</accession>
<accession>L0TB52</accession>
<accession>L0TDU2</accession>
<accession>P0A644</accession>
<accession>Q10805</accession>
<accession>Q10806</accession>
<organism>
    <name type="scientific">Mycobacterium tuberculosis (strain CDC 1551 / Oshkosh)</name>
    <dbReference type="NCBI Taxonomy" id="83331"/>
    <lineage>
        <taxon>Bacteria</taxon>
        <taxon>Bacillati</taxon>
        <taxon>Actinomycetota</taxon>
        <taxon>Actinomycetes</taxon>
        <taxon>Mycobacteriales</taxon>
        <taxon>Mycobacteriaceae</taxon>
        <taxon>Mycobacterium</taxon>
        <taxon>Mycobacterium tuberculosis complex</taxon>
    </lineage>
</organism>
<gene>
    <name evidence="1" type="primary">rlmN</name>
    <name type="ordered locus">MT2947</name>
</gene>
<evidence type="ECO:0000255" key="1">
    <source>
        <dbReference type="HAMAP-Rule" id="MF_01849"/>
    </source>
</evidence>
<evidence type="ECO:0000255" key="2">
    <source>
        <dbReference type="PROSITE-ProRule" id="PRU01266"/>
    </source>
</evidence>
<reference key="1">
    <citation type="journal article" date="2002" name="J. Bacteriol.">
        <title>Whole-genome comparison of Mycobacterium tuberculosis clinical and laboratory strains.</title>
        <authorList>
            <person name="Fleischmann R.D."/>
            <person name="Alland D."/>
            <person name="Eisen J.A."/>
            <person name="Carpenter L."/>
            <person name="White O."/>
            <person name="Peterson J.D."/>
            <person name="DeBoy R.T."/>
            <person name="Dodson R.J."/>
            <person name="Gwinn M.L."/>
            <person name="Haft D.H."/>
            <person name="Hickey E.K."/>
            <person name="Kolonay J.F."/>
            <person name="Nelson W.C."/>
            <person name="Umayam L.A."/>
            <person name="Ermolaeva M.D."/>
            <person name="Salzberg S.L."/>
            <person name="Delcher A."/>
            <person name="Utterback T.R."/>
            <person name="Weidman J.F."/>
            <person name="Khouri H.M."/>
            <person name="Gill J."/>
            <person name="Mikula A."/>
            <person name="Bishai W."/>
            <person name="Jacobs W.R. Jr."/>
            <person name="Venter J.C."/>
            <person name="Fraser C.M."/>
        </authorList>
    </citation>
    <scope>NUCLEOTIDE SEQUENCE [LARGE SCALE GENOMIC DNA]</scope>
    <source>
        <strain>CDC 1551 / Oshkosh</strain>
    </source>
</reference>
<proteinExistence type="inferred from homology"/>